<sequence>MMCQKFYVVLLHWEFLYVIAALNLAYPISPWKFKLFCGPPNTTDDSFLSPAGAPNNASALKGASEAIVEAKFNSSGIYVPELSKTVFHCCFGNEQGQNCSALTDNTEGKTLASVVKASVFRQLGVNWDIECWMKGDLTLFICHMEPLPKNPFKNYDSKVHLLYDLPEVIDDSPLPPLKDSFQTVQCNCSLRGCECHVPVPRAKLNYALLMYLEITSAGVSFQSPLMSLQPMLVVKPDPPLGLHMEVTDDGNLKISWDSQTMAPFPLQYQVKYLENSTIVREAAEIVSATSLLVDSVLPGSSYEVQVRSKRLDGSGVWSDWSSPQVFTTQDVVYFPPKILTSVGSNASFHCIYKNENQIISSKQIVWWRNLAEKIPEIQYSIVSDRVSKVTFSNLKATRPRGKFTYDAVYCCNEQACHHRYAELYVIDVNINISCETDGYLTKMTCRWSPSTIQSLVGSTVQLRYHRRSLYCPDSPSIHPTSEPKNCVLQRDGFYECVFQPIFLLSGYTMWIRINHSLGSLDSPPTCVLPDSVVKPLPPSNVKAEITVNTGLLKVSWEKPVFPENNLQFQIRYGLSGKEIQWKTHEVFDAKSKSASLLVSDLCAVYVVQVRCRRLDGLGYWSNWSSPAYTLVMDVKVPMRGPEFWRKMDGDVTKKERNVTLLWKPLTKNDSLCSVRRYVVKHRTAHNGTWSEDVGNRTNLTFLWTEPAHTVTVLAVNSLGASLVNFNLTFSWPMSKVSAVESLSAYPLSSSCVILSWTLSPDDYSLLYLVIEWKILNEDDGMKWLRIPSNVKKFYIHDNFIPIEKYQFSLYPVFMEGVGKPKIINGFTKDAIDKQQNDAGLYVIVPIIISSCVLLLGTLLISHQRMKKLFWDDVPNPKNCSWAQGLNFQKPETFEHLFTKHAESVIFGPLLLEPEPISEEISVDTAWKNKDEMVPAAMVSLLLTTPDPESSSICISDQCNSANFSGSQSTQVTCEDECQRQPSVKYATLVSNDKLVETDEEQGFIHSPVSNCISSNHSPLRQSFSSSSWETEAQTFFLLSDQQPTMISPQLSFSGLDELLELEGSFPEENHREKSVCYLGVTSVNRRESGVLLTGEAGILCTFPAQCLFSDIRILQERCSHFVENNLSLGTSGENFVPYMPQFQTCSTHSHKIMENKMCDLTV</sequence>
<keyword id="KW-0002">3D-structure</keyword>
<keyword id="KW-0025">Alternative splicing</keyword>
<keyword id="KW-1003">Cell membrane</keyword>
<keyword id="KW-1015">Disulfide bond</keyword>
<keyword id="KW-0325">Glycoprotein</keyword>
<keyword id="KW-0393">Immunoglobulin domain</keyword>
<keyword id="KW-0472">Membrane</keyword>
<keyword id="KW-0550">Obesity</keyword>
<keyword id="KW-0597">Phosphoprotein</keyword>
<keyword id="KW-0675">Receptor</keyword>
<keyword id="KW-1185">Reference proteome</keyword>
<keyword id="KW-0677">Repeat</keyword>
<keyword id="KW-0964">Secreted</keyword>
<keyword id="KW-0732">Signal</keyword>
<keyword id="KW-0812">Transmembrane</keyword>
<keyword id="KW-1133">Transmembrane helix</keyword>
<proteinExistence type="evidence at protein level"/>
<name>LEPR_MOUSE</name>
<reference key="1">
    <citation type="journal article" date="1995" name="Cell">
        <title>Identification and expression cloning of a leptin receptor, OB-R.</title>
        <authorList>
            <person name="Tartaglia L.A."/>
            <person name="Dembski M."/>
            <person name="Weng X."/>
            <person name="Deng N."/>
            <person name="Culpepper J."/>
            <person name="Devos R."/>
            <person name="Richards G.J."/>
            <person name="Campfield L.A."/>
            <person name="Clark F.T."/>
            <person name="Deeds J."/>
            <person name="Muir C."/>
            <person name="Sanker S."/>
            <person name="Moriarty A."/>
            <person name="Moore K.J."/>
            <person name="Smutko J.S."/>
            <person name="Mays G.G."/>
            <person name="Woolf E.A."/>
            <person name="Monroe C.A."/>
            <person name="Tepper R.I."/>
        </authorList>
    </citation>
    <scope>NUCLEOTIDE SEQUENCE [MRNA] (ISOFORM A)</scope>
    <source>
        <tissue>Choroid plexus</tissue>
    </source>
</reference>
<reference key="2">
    <citation type="journal article" date="1996" name="Cell">
        <title>Evidence that the diabetes gene encodes the leptin receptor: identification of a mutation in the leptin receptor gene in db/db mice.</title>
        <authorList>
            <person name="Chen H."/>
            <person name="Charlat O."/>
            <person name="Tartaglia L.A."/>
            <person name="Woolf E.A."/>
            <person name="Weng X."/>
            <person name="Ellis S.J."/>
            <person name="Lakey N.D."/>
            <person name="Culpepper J."/>
            <person name="Moore K.J."/>
            <person name="Breitbart R.E."/>
            <person name="Duyk G.M."/>
            <person name="Tepper R.I."/>
            <person name="Morgenstern J.P."/>
        </authorList>
    </citation>
    <scope>NUCLEOTIDE SEQUENCE [MRNA] (ISOFORM B)</scope>
    <source>
        <strain>C57BLKS/J</strain>
        <tissue>Hypothalamus</tissue>
    </source>
</reference>
<reference key="3">
    <citation type="journal article" date="1996" name="Nature">
        <title>Abnormal splicing of the leptin receptor in diabetic mice.</title>
        <authorList>
            <person name="Lee G.-H."/>
            <person name="Proenca R."/>
            <person name="Montez J.M."/>
            <person name="Carroll K.M."/>
            <person name="Darvishzadeh J.G."/>
            <person name="Lee J.I."/>
            <person name="Friedman J.M."/>
        </authorList>
    </citation>
    <scope>NUCLEOTIDE SEQUENCE [MRNA] (ISOFORMS A; B; C; D AND E)</scope>
    <source>
        <strain>C57BLKS/J</strain>
        <tissue>Hypothalamus</tissue>
    </source>
</reference>
<reference key="4">
    <citation type="journal article" date="1996" name="Nat. Med.">
        <title>Novel B219/OB receptor isoforms: possible role of leptin in hematopoiesis and reproduction.</title>
        <authorList>
            <person name="Cioffi J.A."/>
            <person name="Shafer A.W."/>
            <person name="Zupancic T.J."/>
            <person name="Smith-Gbur J."/>
            <person name="Mikhail A."/>
            <person name="Platika D."/>
            <person name="Snodgrass H.R."/>
        </authorList>
    </citation>
    <scope>NUCLEOTIDE SEQUENCE [MRNA] (ISOFORM C)</scope>
    <source>
        <strain>BALB/cJ</strain>
        <tissue>Liver</tissue>
    </source>
</reference>
<reference key="5">
    <citation type="journal article" date="1996" name="Proc. Natl. Acad. Sci. U.S.A.">
        <title>Defective STAT signaling by the leptin receptor in diabetic mice.</title>
        <authorList>
            <person name="Ghilardi N."/>
            <person name="Ziegler S."/>
            <person name="Wiestner A."/>
            <person name="Stoffel R."/>
            <person name="Heim M.H."/>
            <person name="Skoda R.C."/>
        </authorList>
    </citation>
    <scope>NUCLEOTIDE SEQUENCE [MRNA] (ISOFORMS A AND B)</scope>
    <source>
        <strain>FVB/N</strain>
        <tissue>Spleen</tissue>
    </source>
</reference>
<reference key="6">
    <citation type="journal article" date="1997" name="Endocrinology">
        <title>Hyperleptinemia, leptin resistance, and polymorphic leptin receptor in the New Zealand obese mouse.</title>
        <authorList>
            <person name="Igel M."/>
            <person name="Becker W."/>
            <person name="Herberg L."/>
            <person name="Joost H.G."/>
        </authorList>
    </citation>
    <scope>NUCLEOTIDE SEQUENCE [MRNA] (ISOFORM B)</scope>
    <source>
        <strain>NZO</strain>
        <tissue>Hypothalamus</tissue>
    </source>
</reference>
<reference key="7">
    <citation type="journal article" date="1997" name="Genomics">
        <title>Fine structure of the murine leptin receptor gene: splice site suppression is required to form two alternatively spliced transcripts.</title>
        <authorList>
            <person name="Chua S.C."/>
            <person name="Koutras I.K."/>
            <person name="Han L."/>
            <person name="Liu S.M."/>
            <person name="Kay J."/>
            <person name="Young S.J."/>
            <person name="Chung W.K."/>
            <person name="Leibel R.L."/>
        </authorList>
    </citation>
    <scope>NUCLEOTIDE SEQUENCE [GENOMIC DNA] (ISOFORMS A; B; C AND E)</scope>
    <source>
        <strain>129/J</strain>
    </source>
</reference>
<reference key="8">
    <citation type="journal article" date="1998" name="J. Endocrinol.">
        <title>Hyperleptinemia and leptin receptor variant Asp600Asn in the obese, hyperinsulinemic KK mouse strain.</title>
        <authorList>
            <person name="Igel M."/>
            <person name="Taylor B.A."/>
            <person name="Phillips S.J."/>
            <person name="Becker W."/>
            <person name="Herberg L."/>
            <person name="Joost H.G."/>
        </authorList>
    </citation>
    <scope>NUCLEOTIDE SEQUENCE [MRNA] (ISOFORM B)</scope>
    <scope>VARIANT ASN-600</scope>
    <source>
        <strain>KK Obese</strain>
        <tissue>Hypothalamus</tissue>
    </source>
</reference>
<reference key="9">
    <citation type="submission" date="1998-10" db="EMBL/GenBank/DDBJ databases">
        <title>Murine leptin receptor genomic exon 18b and surrounding sequence.</title>
        <authorList>
            <person name="Banks A.S."/>
            <person name="Myers M.G. Jr."/>
        </authorList>
    </citation>
    <scope>NUCLEOTIDE SEQUENCE OF 890-1162 (ISOFORM B)</scope>
    <source>
        <strain>129</strain>
    </source>
</reference>
<reference key="10">
    <citation type="journal article" date="1998" name="Nature">
        <title>Leptin modulates the T-cell immune response and reverses starvation-induced immunosuppression.</title>
        <authorList>
            <person name="Lord G.M."/>
            <person name="Matarese G."/>
            <person name="Howard J.K."/>
            <person name="Baker R.J."/>
            <person name="Bloom S.R."/>
            <person name="Lechler R.I."/>
        </authorList>
    </citation>
    <scope>FUNCTION</scope>
    <scope>DISRUPTION PHENOTYPE</scope>
    <scope>TISSUE SPECIFICITY</scope>
</reference>
<reference key="11">
    <citation type="journal article" date="2000" name="Cell">
        <title>Leptin inhibits bone formation through a hypothalamic relay: a central control of bone mass.</title>
        <authorList>
            <person name="Ducy P."/>
            <person name="Amling M."/>
            <person name="Takeda S."/>
            <person name="Priemel M."/>
            <person name="Schilling A.F."/>
            <person name="Beil F.T."/>
            <person name="Shen J."/>
            <person name="Vinson C."/>
            <person name="Rueger J.M."/>
            <person name="Karsenty G."/>
        </authorList>
    </citation>
    <scope>FUNCTION</scope>
    <scope>DISRUPTION PHENOTYPE</scope>
</reference>
<reference key="12">
    <citation type="journal article" date="2000" name="FEBS Lett.">
        <title>Identification of the Y985 and Y1077 motifs as SOCS3 recruitment sites in the murine leptin receptor.</title>
        <authorList>
            <person name="Eyckerman S."/>
            <person name="Broekaert D."/>
            <person name="Verhee A."/>
            <person name="Vandekerckhove J."/>
            <person name="Tavernier J."/>
        </authorList>
    </citation>
    <scope>PHOSPHORYLATION AT TYR-985 AND TYR-1077</scope>
</reference>
<reference key="13">
    <citation type="journal article" date="2000" name="J. Biol. Chem.">
        <title>Activation of downstream signals by the long form of the leptin receptor.</title>
        <authorList>
            <person name="Banks A.S."/>
            <person name="Davis S.M."/>
            <person name="Bates S.H."/>
            <person name="Myers M.G. Jr."/>
        </authorList>
    </citation>
    <scope>PHOSPHORYLATION AT TYR-985 AND TYR-1138</scope>
    <scope>STAT3 ACTIVATION</scope>
    <scope>ERK/FOS ACTIVATION</scope>
    <scope>MUTAGENESIS OF TYR-985; TYR-1077 AND TYR-1138</scope>
</reference>
<reference key="14">
    <citation type="journal article" date="2000" name="J. Biol. Chem.">
        <title>SOCS3 mediates feedback inhibition of the leptin receptor via Tyr985.</title>
        <authorList>
            <person name="Bjorbaek C."/>
            <person name="Lavery H.J."/>
            <person name="Bates S.H."/>
            <person name="Olson R.K."/>
            <person name="Davis S.M."/>
            <person name="Flier J.S."/>
            <person name="Myers M.G. Jr."/>
        </authorList>
    </citation>
    <scope>INTERACTION WITH SOCS3</scope>
    <scope>MUTAGENESIS OF TYR-985 AND TYR-1138</scope>
</reference>
<reference key="15">
    <citation type="journal article" date="2002" name="Endocrinology">
        <title>Characterization of short isoforms of the leptin receptor in rat cerebral microvessels and of brain uptake of leptin in mouse models of obesity.</title>
        <authorList>
            <person name="Hileman S.M."/>
            <person name="Pierroz D.D."/>
            <person name="Masuzaki H."/>
            <person name="Bjoerbaek C."/>
            <person name="El-Haschimi K."/>
            <person name="Banks W.A."/>
            <person name="Flier J.S."/>
        </authorList>
    </citation>
    <scope>FUNCTION</scope>
    <scope>DISRUPTION PHENOTYPE</scope>
</reference>
<reference key="16">
    <citation type="journal article" date="2002" name="J. Biol. Chem.">
        <title>Regulation of Jak kinases by intracellular leptin receptor sequences.</title>
        <authorList>
            <person name="Kloek C."/>
            <person name="Haq A.K."/>
            <person name="Dunn S.L."/>
            <person name="Lavery H.J."/>
            <person name="Banks A.S."/>
            <person name="Myers M.G. Jr."/>
        </authorList>
    </citation>
    <scope>DOMAIN JAK2 ACTIVATION</scope>
</reference>
<reference key="17">
    <citation type="journal article" date="2002" name="Mol. Endocrinol.">
        <title>Identification of the critical sequence elements in the cytoplasmic domain of leptin receptor isoforms required for Janus kinase/signal transducer and activator of transcription activation by receptor heterodimers.</title>
        <authorList>
            <person name="Bahrenberg G."/>
            <person name="Behrmann I."/>
            <person name="Barthel A."/>
            <person name="Hekerman P."/>
            <person name="Heinrich P.C."/>
            <person name="Joost H.G."/>
            <person name="Becker W."/>
        </authorList>
    </citation>
    <scope>FUNCTION (ISOFORM A AND ISOFORM B)</scope>
    <scope>INTERACTION WITH JAK2</scope>
    <scope>MUTAGENESIS OF GLU-891; GLU-894; 896-LEU-PHE-897; 899-LYS-HIS-900; GLU-902 AND PRO-908</scope>
</reference>
<reference key="18">
    <citation type="journal article" date="2003" name="Nature">
        <title>STAT3 signalling is required for leptin regulation of energy balance but not reproduction.</title>
        <authorList>
            <person name="Bates S.H."/>
            <person name="Stearns W.H."/>
            <person name="Dundon T.A."/>
            <person name="Schubert M."/>
            <person name="Tso A.W."/>
            <person name="Wang Y."/>
            <person name="Banks A.S."/>
            <person name="Lavery H.J."/>
            <person name="Haq A.K."/>
            <person name="Maratos-Flier E."/>
            <person name="Neel B.G."/>
            <person name="Schwartz M.W."/>
            <person name="Myers M.G. Jr."/>
        </authorList>
    </citation>
    <scope>FUNCTION</scope>
    <scope>DISRUPTION PHENOTYPE</scope>
    <scope>MUTAGENESIS OF TYR-1138</scope>
</reference>
<reference key="19">
    <citation type="journal article" date="2008" name="J. Cell. Physiol.">
        <title>Soluble receptor inhibits leptin transport.</title>
        <authorList>
            <person name="Tu H."/>
            <person name="Kastin A.J."/>
            <person name="Hsuchou H."/>
            <person name="Pan W."/>
        </authorList>
    </citation>
    <scope>FUNCTION (ISOFORM A AND ISOFORM E)</scope>
    <scope>TISSUE SPECIFICITY (ISOFORM E)</scope>
    <scope>SUBCELLULAR LOCATION (ISOFORM E)</scope>
</reference>
<reference key="20">
    <citation type="journal article" date="2010" name="Cell">
        <title>A tissue-specific atlas of mouse protein phosphorylation and expression.</title>
        <authorList>
            <person name="Huttlin E.L."/>
            <person name="Jedrychowski M.P."/>
            <person name="Elias J.E."/>
            <person name="Goswami T."/>
            <person name="Rad R."/>
            <person name="Beausoleil S.A."/>
            <person name="Villen J."/>
            <person name="Haas W."/>
            <person name="Sowa M.E."/>
            <person name="Gygi S.P."/>
        </authorList>
    </citation>
    <scope>PHOSPHORYLATION [LARGE SCALE ANALYSIS] AT SER-880</scope>
    <scope>IDENTIFICATION BY MASS SPECTROMETRY [LARGE SCALE ANALYSIS]</scope>
    <source>
        <tissue>Kidney</tissue>
    </source>
</reference>
<reference key="21">
    <citation type="journal article" date="2010" name="FASEB J.">
        <title>Unique leptin trafficking by a tailless receptor.</title>
        <authorList>
            <person name="Tu H."/>
            <person name="Hsuchou H."/>
            <person name="Kastin A.J."/>
            <person name="Wu X."/>
            <person name="Pan W."/>
        </authorList>
    </citation>
    <scope>FUNCTION (ISOFORM A)</scope>
</reference>
<reference key="22">
    <citation type="journal article" date="2014" name="J. Endocrinol.">
        <title>20 years of leptin: connecting leptin signaling to biological function.</title>
        <authorList>
            <person name="Allison M.B."/>
            <person name="Myers M.G. Jr."/>
        </authorList>
    </citation>
    <scope>REVIEW ON FUNCTION</scope>
    <scope>SUBUNIT</scope>
</reference>
<reference key="23">
    <citation type="journal article" date="2014" name="Nat. Neurosci.">
        <title>Leptin-inhibited PBN neurons enhance responses to hypoglycemia in negative energy balance.</title>
        <authorList>
            <person name="Flak J.N."/>
            <person name="Patterson C.M."/>
            <person name="Garfield A.S."/>
            <person name="D'Agostino G."/>
            <person name="Goforth P.B."/>
            <person name="Sutton A.K."/>
            <person name="Malec P.A."/>
            <person name="Wong J.M."/>
            <person name="Germani M."/>
            <person name="Jones J.C."/>
            <person name="Rajala M."/>
            <person name="Satin L."/>
            <person name="Rhodes C.J."/>
            <person name="Olson D.P."/>
            <person name="Kennedy R.T."/>
            <person name="Heisler L.K."/>
            <person name="Myers M.G. Jr."/>
        </authorList>
    </citation>
    <scope>FUNCTION</scope>
    <scope>DISRUPTION PHENOTYPE</scope>
    <scope>TISSUE SPECIFICITY</scope>
</reference>
<protein>
    <recommendedName>
        <fullName>Leptin receptor</fullName>
        <shortName>LEP-R</shortName>
    </recommendedName>
    <alternativeName>
        <fullName>B219</fullName>
    </alternativeName>
    <alternativeName>
        <fullName>OB receptor</fullName>
        <shortName>OB-R</shortName>
    </alternativeName>
    <cdAntigenName>CD295</cdAntigenName>
</protein>
<comment type="function">
    <text evidence="4 5 8 9 11 14 15 24">Receptor for hormone LEP/leptin (Probable) (PubMed:11861497). On ligand binding, mediates LEP central and peripheral effects through the activation of different signaling pathways such as JAK2/STAT3 and MAPK cascade/FOS (PubMed:10799542, PubMed:11861497, PubMed:11923481, PubMed:25383904). In the hypothalamus, LEP acts as an appetite-regulating factor that induces a decrease in food intake and an increase in energy consumption by inducing anorexinogenic factors and suppressing orexigenic neuropeptides, also regulates bone mass and secretion of hypothalamo-pituitary-adrenal hormones (PubMed:10660043, PubMed:12594516). In the periphery, increases basal metabolism, influences reproductive function, regulates pancreatic beta-cell function and insulin secretion, is pro-angiogenic and affects innate and adaptive immunity (PubMed:11923481, PubMed:25383904). Control of energy homeostasis and melanocortin production (stimulation of POMC and full repression of AgRP transcription) is mediated by STAT3 signaling, whereas distinct signals regulate NPY and the control of fertility, growth and glucose homeostasis (PubMed:12594516). Involved in the regulation of counter-regulatory response to hypoglycemia by inhibiting neurons of the parabrachial nucleus (PubMed:25383904). Has a specific effect on T lymphocyte responses, differentially regulating the proliferation of naive and memory T-cells. Leptin increases Th1 and suppresses Th2 cytokine production (PubMed:9732873).</text>
</comment>
<comment type="function">
    <molecule>Isoform A</molecule>
    <text evidence="9 12 13">May transport LEP across the blood-brain barrier. Binds LEP and mediates LEP endocytosis (PubMed:17620316, PubMed:20223942). Does not induce phosphorylation of and activate STAT3 (PubMed:11923481, PubMed:20223942).</text>
</comment>
<comment type="function">
    <molecule>Isoform E</molecule>
    <text evidence="12">Antagonizes Isoform A and isoform B-mediated LEP binding and endocytosis.</text>
</comment>
<comment type="subunit">
    <text evidence="1 6 9 24">Present as a mixture of monomers and dimers (Probable). The phosphorylated receptor binds a number of SH2 domain-containing proteins such as JAK2, STAT3, PTPN11, and SOCS3 (By similarity) (PubMed:11018044, PubMed:11923481). Interaction with SOCS3 inhibits JAK/STAT signaling and MAPK cascade (PubMed:11018044).</text>
</comment>
<comment type="interaction">
    <interactant intactId="EBI-2257257">
        <id>P48356</id>
    </interactant>
    <interactant intactId="EBI-646604">
        <id>Q62120</id>
        <label>Jak2</label>
    </interactant>
    <organismsDiffer>false</organismsDiffer>
    <experiments>3</experiments>
</comment>
<comment type="interaction">
    <interactant intactId="EBI-2257257">
        <id>P48356</id>
    </interactant>
    <interactant intactId="EBI-16108810">
        <id>P41160</id>
        <label>Lep</label>
    </interactant>
    <organismsDiffer>false</organismsDiffer>
    <experiments>6</experiments>
</comment>
<comment type="interaction">
    <interactant intactId="EBI-2257257">
        <id>P48356</id>
    </interactant>
    <interactant intactId="EBI-300955">
        <id>Q91ZX7</id>
        <label>Lrp1</label>
    </interactant>
    <organismsDiffer>false</organismsDiffer>
    <experiments>2</experiments>
</comment>
<comment type="interaction">
    <interactant intactId="EBI-2257257">
        <id>P48356</id>
    </interactant>
    <interactant intactId="EBI-300133">
        <id>Q62077</id>
        <label>Plcg1</label>
    </interactant>
    <organismsDiffer>false</organismsDiffer>
    <experiments>2</experiments>
</comment>
<comment type="interaction">
    <interactant intactId="EBI-6143588">
        <id>P48356-1</id>
    </interactant>
    <interactant intactId="EBI-1805484">
        <id>Q8NFJ9</id>
        <label>BBS1</label>
    </interactant>
    <organismsDiffer>true</organismsDiffer>
    <experiments>3</experiments>
</comment>
<comment type="subcellular location">
    <subcellularLocation>
        <location evidence="1">Cell membrane</location>
        <topology evidence="1">Single-pass type I membrane protein</topology>
    </subcellularLocation>
    <subcellularLocation>
        <location evidence="1">Basolateral cell membrane</location>
    </subcellularLocation>
</comment>
<comment type="subcellular location">
    <molecule>Isoform E</molecule>
    <subcellularLocation>
        <location evidence="23">Secreted</location>
    </subcellularLocation>
</comment>
<comment type="alternative products">
    <event type="alternative splicing"/>
    <isoform>
        <id>P48356-1</id>
        <name>B</name>
        <sequence type="displayed"/>
    </isoform>
    <isoform>
        <id>P48356-2</id>
        <name>A</name>
        <sequence type="described" ref="VSP_001697 VSP_001698"/>
    </isoform>
    <isoform>
        <id>P48356-3</id>
        <name>C</name>
        <sequence type="described" ref="VSP_001699 VSP_001700"/>
    </isoform>
    <isoform>
        <id>P48356-4</id>
        <name>D</name>
        <sequence type="described" ref="VSP_001701 VSP_001702"/>
    </isoform>
    <isoform>
        <id>P48356-5</id>
        <name>E</name>
        <sequence type="described" ref="VSP_001703 VSP_001704"/>
    </isoform>
</comment>
<comment type="tissue specificity">
    <text evidence="12 14 15">Isoform A: highest level of expression in lung and kidney, also present in heart, brain, spleen, liver, muscle, choroid plexus and hypothalamus. Isoform B: highest levels of expression in hypothalamus and lower levels in brain, testes and adipose tissue. Expressed by neurons of the parabrachial nucleus (PubMed:25383904). Expressed by peripheral blood mononuclear cells and CD4(+) T-cells (PubMed:9732873). Isoform E: expressed in adipose tissue, liver, hypothalamus, cerebral microvessels, heart, and testes (PubMed:17620316).</text>
</comment>
<comment type="domain">
    <text evidence="10">The WSXWS motif appears to be necessary for proper protein folding and thereby efficient intracellular transport and cell-surface receptor binding.</text>
</comment>
<comment type="domain">
    <text evidence="10">The box 1 motif is required for JAK interaction and/or activation.</text>
</comment>
<comment type="PTM">
    <text evidence="5 7">On ligand binding, phosphorylated on two conserved C-terminal tyrosine residues (isoform B only) by JAK2. Tyr-985 is required for complete binding and activation of PTPN11, ERK/FOS activation,for interaction with SOCS3 and SOCS3 mediated inhibition of leptin signaling. Phosphorylation on Tyr-1138 is required for STAT3 binding/activation. Phosphorylation of Tyr-1077 has a more accessory role.</text>
</comment>
<comment type="disruption phenotype">
    <text evidence="4 8 11 14 15">Mutants are hyperphagic, obese, infertile, diabetic and have impaired growth (PubMed:12594516). Have wet brain weight significantly lower than controls. Brain uptake of leptin is also reduced (PubMed:11861497). Animals have an increased bone formation leading to high bone mass (PubMed:10660043). Have impaired T-cell immunity, Th2 responses are favoured in mutants (PubMed:9732873). Conditional knockout in parabrachial nucleus CCK-expressing neurons, treated with 2-deoxyglucose, have increased levels of glucagon, corticosterone and epinephrin concentrations compared to wild-types (PubMed:25383904).</text>
</comment>
<comment type="similarity">
    <text evidence="21">Belongs to the type I cytokine receptor family. Type 2 subfamily.</text>
</comment>
<gene>
    <name type="primary">Lepr</name>
    <name type="synonym">Db</name>
    <name type="synonym">Obr</name>
</gene>
<feature type="signal peptide" evidence="2">
    <location>
        <begin position="1"/>
        <end position="21"/>
    </location>
</feature>
<feature type="chain" id="PRO_0000010906" description="Leptin receptor">
    <location>
        <begin position="22"/>
        <end position="1162"/>
    </location>
</feature>
<feature type="topological domain" description="Extracellular" evidence="2">
    <location>
        <begin position="22"/>
        <end position="839"/>
    </location>
</feature>
<feature type="transmembrane region" description="Helical" evidence="2">
    <location>
        <begin position="840"/>
        <end position="860"/>
    </location>
</feature>
<feature type="topological domain" description="Cytoplasmic" evidence="2">
    <location>
        <begin position="861"/>
        <end position="1162"/>
    </location>
</feature>
<feature type="domain" description="Fibronectin type-III 1" evidence="3">
    <location>
        <begin position="238"/>
        <end position="331"/>
    </location>
</feature>
<feature type="domain" description="Ig-like">
    <location>
        <begin position="329"/>
        <end position="427"/>
    </location>
</feature>
<feature type="domain" description="Fibronectin type-III 2" evidence="3">
    <location>
        <begin position="537"/>
        <end position="632"/>
    </location>
</feature>
<feature type="domain" description="Fibronectin type-III 3" evidence="3">
    <location>
        <begin position="637"/>
        <end position="729"/>
    </location>
</feature>
<feature type="domain" description="Fibronectin type-III 4" evidence="3">
    <location>
        <begin position="738"/>
        <end position="832"/>
    </location>
</feature>
<feature type="region of interest" description="Leptin-binding" evidence="1">
    <location>
        <begin position="465"/>
        <end position="482"/>
    </location>
</feature>
<feature type="region of interest" description="Required for JAK2 activation" evidence="10">
    <location>
        <begin position="891"/>
        <end position="896"/>
    </location>
</feature>
<feature type="region of interest" description="Required for STAT3 phosphorylation" evidence="9">
    <location>
        <begin position="896"/>
        <end position="904"/>
    </location>
</feature>
<feature type="short sequence motif" description="WSXWS motif">
    <location>
        <begin position="620"/>
        <end position="624"/>
    </location>
</feature>
<feature type="short sequence motif" description="Box 1 motif">
    <location>
        <begin position="869"/>
        <end position="877"/>
    </location>
</feature>
<feature type="modified residue" description="Phosphoserine" evidence="25">
    <location>
        <position position="880"/>
    </location>
</feature>
<feature type="modified residue" description="Phosphotyrosine; by JAK2" evidence="5 7">
    <location>
        <position position="985"/>
    </location>
</feature>
<feature type="modified residue" description="Phosphotyrosine" evidence="7">
    <location>
        <position position="1077"/>
    </location>
</feature>
<feature type="modified residue" description="Phosphotyrosine; by JAK2" evidence="22">
    <location>
        <position position="1138"/>
    </location>
</feature>
<feature type="glycosylation site" description="N-linked (GlcNAc...) asparagine" evidence="2">
    <location>
        <position position="41"/>
    </location>
</feature>
<feature type="glycosylation site" description="N-linked (GlcNAc...) asparagine" evidence="2">
    <location>
        <position position="56"/>
    </location>
</feature>
<feature type="glycosylation site" description="N-linked (GlcNAc...) asparagine" evidence="2">
    <location>
        <position position="73"/>
    </location>
</feature>
<feature type="glycosylation site" description="N-linked (GlcNAc...) asparagine" evidence="2">
    <location>
        <position position="98"/>
    </location>
</feature>
<feature type="glycosylation site" description="N-linked (GlcNAc...) asparagine" evidence="2">
    <location>
        <position position="187"/>
    </location>
</feature>
<feature type="glycosylation site" description="N-linked (GlcNAc...) asparagine" evidence="2">
    <location>
        <position position="275"/>
    </location>
</feature>
<feature type="glycosylation site" description="N-linked (GlcNAc...) asparagine" evidence="2">
    <location>
        <position position="345"/>
    </location>
</feature>
<feature type="glycosylation site" description="N-linked (GlcNAc...) asparagine" evidence="2">
    <location>
        <position position="431"/>
    </location>
</feature>
<feature type="glycosylation site" description="N-linked (GlcNAc...) asparagine" evidence="2">
    <location>
        <position position="514"/>
    </location>
</feature>
<feature type="glycosylation site" description="N-linked (GlcNAc...) asparagine" evidence="2">
    <location>
        <position position="622"/>
    </location>
</feature>
<feature type="glycosylation site" description="N-linked (GlcNAc...) asparagine" evidence="2">
    <location>
        <position position="657"/>
    </location>
</feature>
<feature type="glycosylation site" description="N-linked (GlcNAc...) asparagine" evidence="2">
    <location>
        <position position="668"/>
    </location>
</feature>
<feature type="glycosylation site" description="N-linked (GlcNAc...) asparagine" evidence="2">
    <location>
        <position position="686"/>
    </location>
</feature>
<feature type="glycosylation site" description="N-linked (GlcNAc...) asparagine" evidence="2">
    <location>
        <position position="695"/>
    </location>
</feature>
<feature type="glycosylation site" description="N-linked (GlcNAc...) asparagine" evidence="2">
    <location>
        <position position="698"/>
    </location>
</feature>
<feature type="glycosylation site" description="N-linked (GlcNAc...) asparagine" evidence="2">
    <location>
        <position position="726"/>
    </location>
</feature>
<feature type="disulfide bond" evidence="1">
    <location>
        <begin position="37"/>
        <end position="90"/>
    </location>
</feature>
<feature type="disulfide bond" evidence="1">
    <location>
        <begin position="89"/>
        <end position="99"/>
    </location>
</feature>
<feature type="disulfide bond" evidence="1">
    <location>
        <begin position="131"/>
        <end position="142"/>
    </location>
</feature>
<feature type="disulfide bond" evidence="1">
    <location>
        <begin position="186"/>
        <end position="195"/>
    </location>
</feature>
<feature type="disulfide bond" evidence="1">
    <location>
        <begin position="188"/>
        <end position="193"/>
    </location>
</feature>
<feature type="disulfide bond" evidence="1">
    <location>
        <begin position="350"/>
        <end position="410"/>
    </location>
</feature>
<feature type="disulfide bond" evidence="1">
    <location>
        <begin position="411"/>
        <end position="416"/>
    </location>
</feature>
<feature type="disulfide bond" evidence="1">
    <location>
        <begin position="434"/>
        <end position="445"/>
    </location>
</feature>
<feature type="disulfide bond" evidence="1">
    <location>
        <begin position="471"/>
        <end position="526"/>
    </location>
</feature>
<feature type="disulfide bond" evidence="1">
    <location>
        <begin position="486"/>
        <end position="496"/>
    </location>
</feature>
<feature type="splice variant" id="VSP_001703" description="In isoform E." evidence="19">
    <original>DNFIPIEKY</original>
    <variation>GMCTVLFMD</variation>
    <location>
        <begin position="797"/>
        <end position="805"/>
    </location>
</feature>
<feature type="splice variant" id="VSP_001704" description="In isoform E." evidence="19">
    <location>
        <begin position="806"/>
        <end position="1162"/>
    </location>
</feature>
<feature type="splice variant" id="VSP_001701" description="In isoform D." evidence="19">
    <original>PETFEHLFTKH</original>
    <variation>DISFHEVFIFR</variation>
    <location>
        <begin position="890"/>
        <end position="900"/>
    </location>
</feature>
<feature type="splice variant" id="VSP_001697" description="In isoform A." evidence="17 19 20">
    <original>PETFE</original>
    <variation>RTDTL</variation>
    <location>
        <begin position="890"/>
        <end position="894"/>
    </location>
</feature>
<feature type="splice variant" id="VSP_001699" description="In isoform C." evidence="18 19">
    <original>PET</original>
    <variation>VTV</variation>
    <location>
        <begin position="890"/>
        <end position="892"/>
    </location>
</feature>
<feature type="splice variant" id="VSP_001700" description="In isoform C." evidence="18 19">
    <location>
        <begin position="893"/>
        <end position="1162"/>
    </location>
</feature>
<feature type="splice variant" id="VSP_001698" description="In isoform A." evidence="17 19 20">
    <location>
        <begin position="895"/>
        <end position="1162"/>
    </location>
</feature>
<feature type="splice variant" id="VSP_001702" description="In isoform D." evidence="19">
    <location>
        <begin position="901"/>
        <end position="1162"/>
    </location>
</feature>
<feature type="sequence variant" description="In strain: NZO.">
    <original>V</original>
    <variation>I</variation>
    <location>
        <position position="541"/>
    </location>
</feature>
<feature type="sequence variant" description="In strain: KK Obese." evidence="16">
    <original>D</original>
    <variation>N</variation>
    <location>
        <position position="600"/>
    </location>
</feature>
<feature type="sequence variant" description="In strain: NZO.">
    <original>V</original>
    <variation>I</variation>
    <location>
        <position position="651"/>
    </location>
</feature>
<feature type="sequence variant" description="In strain: NZO.">
    <original>T</original>
    <variation>I</variation>
    <location>
        <position position="1044"/>
    </location>
</feature>
<feature type="mutagenesis site" description="No effect on STAT3 phosphorylation." evidence="9">
    <original>E</original>
    <variation>A</variation>
    <location>
        <position position="891"/>
    </location>
</feature>
<feature type="mutagenesis site" description="No effect on STAT3 phosphorylation." evidence="9">
    <original>E</original>
    <variation>A</variation>
    <location>
        <position position="894"/>
    </location>
</feature>
<feature type="mutagenesis site" description="Abrogates STAT3 phosphorylation." evidence="9">
    <original>LF</original>
    <variation>AA</variation>
    <location>
        <begin position="896"/>
        <end position="897"/>
    </location>
</feature>
<feature type="mutagenesis site" description="No effect on STAT3 phosphorylation." evidence="9">
    <original>KH</original>
    <variation>AA</variation>
    <location>
        <begin position="899"/>
        <end position="900"/>
    </location>
</feature>
<feature type="mutagenesis site" description="No effect on STAT3 phosphorylation." evidence="9">
    <original>E</original>
    <variation>A</variation>
    <location>
        <position position="902"/>
    </location>
</feature>
<feature type="mutagenesis site" description="No effect on STAT3 phosphorylation." evidence="9">
    <original>P</original>
    <variation>A</variation>
    <location>
        <position position="908"/>
    </location>
</feature>
<feature type="mutagenesis site" description="No change in EPO-induced JAK2 activation and EPO-induced tyrosine phosphorylation. No phosphorylation; when associated with S-1138. No phosphorylation; when associated with both S-1138 and F-1077. No change in STAT3 activation. No PTPN11 binding. No SOCS3 binding nor inhibition of signaling. Greatly reduced ERK/FOS activation. Mutants are hyperphagic, obese and hyperglycaemic, females show a defect in lactation." evidence="5 6 11">
    <original>Y</original>
    <variation>L</variation>
    <location>
        <position position="985"/>
    </location>
</feature>
<feature type="mutagenesis site" description="No effect on EPO-induced tyrosine phosphorylation." evidence="5">
    <original>Y</original>
    <variation>F</variation>
    <location>
        <position position="1077"/>
    </location>
</feature>
<feature type="mutagenesis site" description="No change in EPO-induced JAK2 activation and EPO-induced tyrosine phosphorylation. No phosphorylation; when associated with L-985. No phosphorylation; when associated with L-985 and F-1077. No STAT3 activation. No change in SOCS3 binding nor signaling inhibition. No effect on ERK/FOS activation." evidence="5 6">
    <original>Y</original>
    <variation>S</variation>
    <location>
        <position position="1138"/>
    </location>
</feature>
<feature type="sequence conflict" description="In Ref. 5; AAC52705/AAC52706/AAC52707." evidence="21" ref="5">
    <original>F</original>
    <variation>I</variation>
    <location>
        <position position="140"/>
    </location>
</feature>
<feature type="sequence conflict" description="In Ref. 6; CAA71343." evidence="21" ref="6">
    <original>A</original>
    <variation>T</variation>
    <location>
        <position position="720"/>
    </location>
</feature>
<feature type="strand" evidence="27">
    <location>
        <begin position="330"/>
        <end position="341"/>
    </location>
</feature>
<feature type="strand" evidence="27">
    <location>
        <begin position="346"/>
        <end position="354"/>
    </location>
</feature>
<feature type="helix" evidence="27">
    <location>
        <begin position="361"/>
        <end position="363"/>
    </location>
</feature>
<feature type="strand" evidence="27">
    <location>
        <begin position="364"/>
        <end position="368"/>
    </location>
</feature>
<feature type="turn" evidence="27">
    <location>
        <begin position="369"/>
        <end position="371"/>
    </location>
</feature>
<feature type="helix" evidence="27">
    <location>
        <begin position="376"/>
        <end position="378"/>
    </location>
</feature>
<feature type="strand" evidence="27">
    <location>
        <begin position="379"/>
        <end position="381"/>
    </location>
</feature>
<feature type="strand" evidence="27">
    <location>
        <begin position="383"/>
        <end position="385"/>
    </location>
</feature>
<feature type="strand" evidence="27">
    <location>
        <begin position="387"/>
        <end position="391"/>
    </location>
</feature>
<feature type="strand" evidence="27">
    <location>
        <begin position="405"/>
        <end position="412"/>
    </location>
</feature>
<feature type="strand" evidence="27">
    <location>
        <begin position="421"/>
        <end position="426"/>
    </location>
</feature>
<feature type="strand" evidence="26">
    <location>
        <begin position="433"/>
        <end position="436"/>
    </location>
</feature>
<feature type="strand" evidence="26">
    <location>
        <begin position="443"/>
        <end position="447"/>
    </location>
</feature>
<feature type="turn" evidence="27">
    <location>
        <begin position="450"/>
        <end position="454"/>
    </location>
</feature>
<feature type="strand" evidence="26">
    <location>
        <begin position="458"/>
        <end position="470"/>
    </location>
</feature>
<feature type="strand" evidence="26">
    <location>
        <begin position="482"/>
        <end position="484"/>
    </location>
</feature>
<feature type="strand" evidence="26">
    <location>
        <begin position="494"/>
        <end position="498"/>
    </location>
</feature>
<feature type="strand" evidence="26">
    <location>
        <begin position="505"/>
        <end position="515"/>
    </location>
</feature>
<feature type="strand" evidence="26">
    <location>
        <begin position="518"/>
        <end position="521"/>
    </location>
</feature>
<feature type="strand" evidence="26">
    <location>
        <begin position="525"/>
        <end position="527"/>
    </location>
</feature>
<feature type="helix" evidence="26">
    <location>
        <begin position="529"/>
        <end position="532"/>
    </location>
</feature>
<feature type="strand" evidence="26">
    <location>
        <begin position="539"/>
        <end position="546"/>
    </location>
</feature>
<feature type="turn" evidence="26">
    <location>
        <begin position="547"/>
        <end position="550"/>
    </location>
</feature>
<feature type="strand" evidence="26">
    <location>
        <begin position="551"/>
        <end position="557"/>
    </location>
</feature>
<feature type="strand" evidence="26">
    <location>
        <begin position="566"/>
        <end position="574"/>
    </location>
</feature>
<feature type="strand" evidence="26">
    <location>
        <begin position="576"/>
        <end position="578"/>
    </location>
</feature>
<feature type="strand" evidence="26">
    <location>
        <begin position="582"/>
        <end position="586"/>
    </location>
</feature>
<feature type="strand" evidence="26">
    <location>
        <begin position="593"/>
        <end position="596"/>
    </location>
</feature>
<feature type="strand" evidence="26">
    <location>
        <begin position="605"/>
        <end position="613"/>
    </location>
</feature>
<feature type="strand" evidence="28">
    <location>
        <begin position="643"/>
        <end position="649"/>
    </location>
</feature>
<feature type="strand" evidence="28">
    <location>
        <begin position="656"/>
        <end position="662"/>
    </location>
</feature>
<feature type="helix" evidence="28">
    <location>
        <begin position="667"/>
        <end position="670"/>
    </location>
</feature>
<feature type="strand" evidence="28">
    <location>
        <begin position="676"/>
        <end position="683"/>
    </location>
</feature>
<feature type="turn" evidence="28">
    <location>
        <begin position="684"/>
        <end position="686"/>
    </location>
</feature>
<feature type="strand" evidence="28">
    <location>
        <begin position="687"/>
        <end position="694"/>
    </location>
</feature>
<feature type="strand" evidence="28">
    <location>
        <begin position="697"/>
        <end position="703"/>
    </location>
</feature>
<feature type="strand" evidence="28">
    <location>
        <begin position="708"/>
        <end position="716"/>
    </location>
</feature>
<feature type="strand" evidence="28">
    <location>
        <begin position="726"/>
        <end position="729"/>
    </location>
</feature>
<feature type="helix" evidence="28">
    <location>
        <begin position="732"/>
        <end position="735"/>
    </location>
</feature>
<feature type="strand" evidence="28">
    <location>
        <begin position="739"/>
        <end position="748"/>
    </location>
</feature>
<feature type="strand" evidence="28">
    <location>
        <begin position="751"/>
        <end position="758"/>
    </location>
</feature>
<feature type="strand" evidence="28">
    <location>
        <begin position="765"/>
        <end position="774"/>
    </location>
</feature>
<feature type="strand" evidence="28">
    <location>
        <begin position="782"/>
        <end position="787"/>
    </location>
</feature>
<feature type="strand" evidence="28">
    <location>
        <begin position="791"/>
        <end position="796"/>
    </location>
</feature>
<feature type="strand" evidence="28">
    <location>
        <begin position="805"/>
        <end position="813"/>
    </location>
</feature>
<feature type="strand" evidence="28">
    <location>
        <begin position="821"/>
        <end position="825"/>
    </location>
</feature>
<evidence type="ECO:0000250" key="1">
    <source>
        <dbReference type="UniProtKB" id="P48357"/>
    </source>
</evidence>
<evidence type="ECO:0000255" key="2"/>
<evidence type="ECO:0000255" key="3">
    <source>
        <dbReference type="PROSITE-ProRule" id="PRU00316"/>
    </source>
</evidence>
<evidence type="ECO:0000269" key="4">
    <source>
    </source>
</evidence>
<evidence type="ECO:0000269" key="5">
    <source>
    </source>
</evidence>
<evidence type="ECO:0000269" key="6">
    <source>
    </source>
</evidence>
<evidence type="ECO:0000269" key="7">
    <source>
    </source>
</evidence>
<evidence type="ECO:0000269" key="8">
    <source>
    </source>
</evidence>
<evidence type="ECO:0000269" key="9">
    <source>
    </source>
</evidence>
<evidence type="ECO:0000269" key="10">
    <source>
    </source>
</evidence>
<evidence type="ECO:0000269" key="11">
    <source>
    </source>
</evidence>
<evidence type="ECO:0000269" key="12">
    <source>
    </source>
</evidence>
<evidence type="ECO:0000269" key="13">
    <source>
    </source>
</evidence>
<evidence type="ECO:0000269" key="14">
    <source>
    </source>
</evidence>
<evidence type="ECO:0000269" key="15">
    <source>
    </source>
</evidence>
<evidence type="ECO:0000269" key="16">
    <source>
    </source>
</evidence>
<evidence type="ECO:0000303" key="17">
    <source>
    </source>
</evidence>
<evidence type="ECO:0000303" key="18">
    <source>
    </source>
</evidence>
<evidence type="ECO:0000303" key="19">
    <source>
    </source>
</evidence>
<evidence type="ECO:0000303" key="20">
    <source>
    </source>
</evidence>
<evidence type="ECO:0000305" key="21"/>
<evidence type="ECO:0000305" key="22">
    <source>
    </source>
</evidence>
<evidence type="ECO:0000305" key="23">
    <source>
    </source>
</evidence>
<evidence type="ECO:0000305" key="24">
    <source>
    </source>
</evidence>
<evidence type="ECO:0007744" key="25">
    <source>
    </source>
</evidence>
<evidence type="ECO:0007829" key="26">
    <source>
        <dbReference type="PDB" id="7Z3P"/>
    </source>
</evidence>
<evidence type="ECO:0007829" key="27">
    <source>
        <dbReference type="PDB" id="7Z3R"/>
    </source>
</evidence>
<evidence type="ECO:0007829" key="28">
    <source>
        <dbReference type="PDB" id="8AV2"/>
    </source>
</evidence>
<organism>
    <name type="scientific">Mus musculus</name>
    <name type="common">Mouse</name>
    <dbReference type="NCBI Taxonomy" id="10090"/>
    <lineage>
        <taxon>Eukaryota</taxon>
        <taxon>Metazoa</taxon>
        <taxon>Chordata</taxon>
        <taxon>Craniata</taxon>
        <taxon>Vertebrata</taxon>
        <taxon>Euteleostomi</taxon>
        <taxon>Mammalia</taxon>
        <taxon>Eutheria</taxon>
        <taxon>Euarchontoglires</taxon>
        <taxon>Glires</taxon>
        <taxon>Rodentia</taxon>
        <taxon>Myomorpha</taxon>
        <taxon>Muroidea</taxon>
        <taxon>Muridae</taxon>
        <taxon>Murinae</taxon>
        <taxon>Mus</taxon>
        <taxon>Mus</taxon>
    </lineage>
</organism>
<dbReference type="EMBL" id="U42467">
    <property type="protein sequence ID" value="AAA93014.1"/>
    <property type="molecule type" value="mRNA"/>
</dbReference>
<dbReference type="EMBL" id="U46135">
    <property type="protein sequence ID" value="AAC52408.1"/>
    <property type="molecule type" value="mRNA"/>
</dbReference>
<dbReference type="EMBL" id="U49106">
    <property type="protein sequence ID" value="AAC52420.1"/>
    <property type="molecule type" value="mRNA"/>
</dbReference>
<dbReference type="EMBL" id="U49107">
    <property type="protein sequence ID" value="AAC52421.1"/>
    <property type="molecule type" value="mRNA"/>
</dbReference>
<dbReference type="EMBL" id="U49108">
    <property type="protein sequence ID" value="AAC52422.1"/>
    <property type="molecule type" value="mRNA"/>
</dbReference>
<dbReference type="EMBL" id="U49109">
    <property type="protein sequence ID" value="AAC52423.1"/>
    <property type="molecule type" value="mRNA"/>
</dbReference>
<dbReference type="EMBL" id="U49110">
    <property type="protein sequence ID" value="AAC52424.1"/>
    <property type="molecule type" value="mRNA"/>
</dbReference>
<dbReference type="EMBL" id="U52915">
    <property type="protein sequence ID" value="AAC52599.1"/>
    <property type="molecule type" value="mRNA"/>
</dbReference>
<dbReference type="EMBL" id="U58861">
    <property type="protein sequence ID" value="AAC52705.1"/>
    <property type="molecule type" value="mRNA"/>
</dbReference>
<dbReference type="EMBL" id="U58862">
    <property type="protein sequence ID" value="AAC52706.1"/>
    <property type="molecule type" value="mRNA"/>
</dbReference>
<dbReference type="EMBL" id="U58863">
    <property type="protein sequence ID" value="AAC52707.1"/>
    <property type="molecule type" value="mRNA"/>
</dbReference>
<dbReference type="EMBL" id="Y10298">
    <property type="protein sequence ID" value="CAA71343.1"/>
    <property type="molecule type" value="mRNA"/>
</dbReference>
<dbReference type="EMBL" id="AF039456">
    <property type="protein sequence ID" value="AAB95334.1"/>
    <property type="molecule type" value="Genomic_DNA"/>
</dbReference>
<dbReference type="EMBL" id="AF039443">
    <property type="protein sequence ID" value="AAB95334.1"/>
    <property type="status" value="JOINED"/>
    <property type="molecule type" value="Genomic_DNA"/>
</dbReference>
<dbReference type="EMBL" id="AF039444">
    <property type="protein sequence ID" value="AAB95334.1"/>
    <property type="status" value="JOINED"/>
    <property type="molecule type" value="Genomic_DNA"/>
</dbReference>
<dbReference type="EMBL" id="AF039445">
    <property type="protein sequence ID" value="AAB95334.1"/>
    <property type="status" value="JOINED"/>
    <property type="molecule type" value="Genomic_DNA"/>
</dbReference>
<dbReference type="EMBL" id="AF039446">
    <property type="protein sequence ID" value="AAB95334.1"/>
    <property type="status" value="JOINED"/>
    <property type="molecule type" value="Genomic_DNA"/>
</dbReference>
<dbReference type="EMBL" id="AF039447">
    <property type="protein sequence ID" value="AAB95334.1"/>
    <property type="status" value="JOINED"/>
    <property type="molecule type" value="Genomic_DNA"/>
</dbReference>
<dbReference type="EMBL" id="AF039448">
    <property type="protein sequence ID" value="AAB95334.1"/>
    <property type="status" value="JOINED"/>
    <property type="molecule type" value="Genomic_DNA"/>
</dbReference>
<dbReference type="EMBL" id="AF039449">
    <property type="protein sequence ID" value="AAB95334.1"/>
    <property type="status" value="JOINED"/>
    <property type="molecule type" value="Genomic_DNA"/>
</dbReference>
<dbReference type="EMBL" id="AF039450">
    <property type="protein sequence ID" value="AAB95334.1"/>
    <property type="status" value="JOINED"/>
    <property type="molecule type" value="Genomic_DNA"/>
</dbReference>
<dbReference type="EMBL" id="AF039451">
    <property type="protein sequence ID" value="AAB95334.1"/>
    <property type="status" value="JOINED"/>
    <property type="molecule type" value="Genomic_DNA"/>
</dbReference>
<dbReference type="EMBL" id="AF039452">
    <property type="protein sequence ID" value="AAB95334.1"/>
    <property type="status" value="JOINED"/>
    <property type="molecule type" value="Genomic_DNA"/>
</dbReference>
<dbReference type="EMBL" id="AF039453">
    <property type="protein sequence ID" value="AAB95334.1"/>
    <property type="status" value="JOINED"/>
    <property type="molecule type" value="Genomic_DNA"/>
</dbReference>
<dbReference type="EMBL" id="AF039454">
    <property type="protein sequence ID" value="AAB95334.1"/>
    <property type="status" value="JOINED"/>
    <property type="molecule type" value="Genomic_DNA"/>
</dbReference>
<dbReference type="EMBL" id="AF039455">
    <property type="protein sequence ID" value="AAB95334.1"/>
    <property type="status" value="JOINED"/>
    <property type="molecule type" value="Genomic_DNA"/>
</dbReference>
<dbReference type="EMBL" id="AF039461">
    <property type="protein sequence ID" value="AAB95333.1"/>
    <property type="status" value="ALT_TERM"/>
    <property type="molecule type" value="Genomic_DNA"/>
</dbReference>
<dbReference type="EMBL" id="AF039443">
    <property type="protein sequence ID" value="AAB95333.1"/>
    <property type="status" value="JOINED"/>
    <property type="molecule type" value="Genomic_DNA"/>
</dbReference>
<dbReference type="EMBL" id="AF039444">
    <property type="protein sequence ID" value="AAB95333.1"/>
    <property type="status" value="JOINED"/>
    <property type="molecule type" value="Genomic_DNA"/>
</dbReference>
<dbReference type="EMBL" id="AF039445">
    <property type="protein sequence ID" value="AAB95333.1"/>
    <property type="status" value="JOINED"/>
    <property type="molecule type" value="Genomic_DNA"/>
</dbReference>
<dbReference type="EMBL" id="AF039446">
    <property type="protein sequence ID" value="AAB95333.1"/>
    <property type="status" value="JOINED"/>
    <property type="molecule type" value="Genomic_DNA"/>
</dbReference>
<dbReference type="EMBL" id="AF039447">
    <property type="protein sequence ID" value="AAB95333.1"/>
    <property type="status" value="JOINED"/>
    <property type="molecule type" value="Genomic_DNA"/>
</dbReference>
<dbReference type="EMBL" id="AF039448">
    <property type="protein sequence ID" value="AAB95333.1"/>
    <property type="status" value="JOINED"/>
    <property type="molecule type" value="Genomic_DNA"/>
</dbReference>
<dbReference type="EMBL" id="AF039449">
    <property type="protein sequence ID" value="AAB95333.1"/>
    <property type="status" value="JOINED"/>
    <property type="molecule type" value="Genomic_DNA"/>
</dbReference>
<dbReference type="EMBL" id="AF039450">
    <property type="protein sequence ID" value="AAB95333.1"/>
    <property type="status" value="JOINED"/>
    <property type="molecule type" value="Genomic_DNA"/>
</dbReference>
<dbReference type="EMBL" id="AF039451">
    <property type="protein sequence ID" value="AAB95333.1"/>
    <property type="status" value="JOINED"/>
    <property type="molecule type" value="Genomic_DNA"/>
</dbReference>
<dbReference type="EMBL" id="AF039452">
    <property type="protein sequence ID" value="AAB95333.1"/>
    <property type="status" value="JOINED"/>
    <property type="molecule type" value="Genomic_DNA"/>
</dbReference>
<dbReference type="EMBL" id="AF039453">
    <property type="protein sequence ID" value="AAB95333.1"/>
    <property type="status" value="JOINED"/>
    <property type="molecule type" value="Genomic_DNA"/>
</dbReference>
<dbReference type="EMBL" id="AF039454">
    <property type="protein sequence ID" value="AAB95333.1"/>
    <property type="status" value="JOINED"/>
    <property type="molecule type" value="Genomic_DNA"/>
</dbReference>
<dbReference type="EMBL" id="AF039455">
    <property type="protein sequence ID" value="AAB95333.1"/>
    <property type="status" value="JOINED"/>
    <property type="molecule type" value="Genomic_DNA"/>
</dbReference>
<dbReference type="EMBL" id="AF039456">
    <property type="protein sequence ID" value="AAB95333.1"/>
    <property type="status" value="JOINED"/>
    <property type="molecule type" value="Genomic_DNA"/>
</dbReference>
<dbReference type="EMBL" id="AF039457">
    <property type="protein sequence ID" value="AAB95333.1"/>
    <property type="status" value="JOINED"/>
    <property type="molecule type" value="Genomic_DNA"/>
</dbReference>
<dbReference type="EMBL" id="AF039458">
    <property type="protein sequence ID" value="AAB95333.1"/>
    <property type="status" value="JOINED"/>
    <property type="molecule type" value="Genomic_DNA"/>
</dbReference>
<dbReference type="EMBL" id="AF039459">
    <property type="protein sequence ID" value="AAB95333.1"/>
    <property type="status" value="JOINED"/>
    <property type="molecule type" value="Genomic_DNA"/>
</dbReference>
<dbReference type="EMBL" id="AF039459">
    <property type="protein sequence ID" value="AAB95335.1"/>
    <property type="molecule type" value="Genomic_DNA"/>
</dbReference>
<dbReference type="EMBL" id="AF039443">
    <property type="protein sequence ID" value="AAB95335.1"/>
    <property type="status" value="JOINED"/>
    <property type="molecule type" value="Genomic_DNA"/>
</dbReference>
<dbReference type="EMBL" id="AF039444">
    <property type="protein sequence ID" value="AAB95335.1"/>
    <property type="status" value="JOINED"/>
    <property type="molecule type" value="Genomic_DNA"/>
</dbReference>
<dbReference type="EMBL" id="AF039445">
    <property type="protein sequence ID" value="AAB95335.1"/>
    <property type="status" value="JOINED"/>
    <property type="molecule type" value="Genomic_DNA"/>
</dbReference>
<dbReference type="EMBL" id="AF039446">
    <property type="protein sequence ID" value="AAB95335.1"/>
    <property type="status" value="JOINED"/>
    <property type="molecule type" value="Genomic_DNA"/>
</dbReference>
<dbReference type="EMBL" id="AF039447">
    <property type="protein sequence ID" value="AAB95335.1"/>
    <property type="status" value="JOINED"/>
    <property type="molecule type" value="Genomic_DNA"/>
</dbReference>
<dbReference type="EMBL" id="AF039448">
    <property type="protein sequence ID" value="AAB95335.1"/>
    <property type="status" value="JOINED"/>
    <property type="molecule type" value="Genomic_DNA"/>
</dbReference>
<dbReference type="EMBL" id="AF039449">
    <property type="protein sequence ID" value="AAB95335.1"/>
    <property type="status" value="JOINED"/>
    <property type="molecule type" value="Genomic_DNA"/>
</dbReference>
<dbReference type="EMBL" id="AF039450">
    <property type="protein sequence ID" value="AAB95335.1"/>
    <property type="status" value="JOINED"/>
    <property type="molecule type" value="Genomic_DNA"/>
</dbReference>
<dbReference type="EMBL" id="AF039451">
    <property type="protein sequence ID" value="AAB95335.1"/>
    <property type="status" value="JOINED"/>
    <property type="molecule type" value="Genomic_DNA"/>
</dbReference>
<dbReference type="EMBL" id="AF039452">
    <property type="protein sequence ID" value="AAB95335.1"/>
    <property type="status" value="JOINED"/>
    <property type="molecule type" value="Genomic_DNA"/>
</dbReference>
<dbReference type="EMBL" id="AF039453">
    <property type="protein sequence ID" value="AAB95335.1"/>
    <property type="status" value="JOINED"/>
    <property type="molecule type" value="Genomic_DNA"/>
</dbReference>
<dbReference type="EMBL" id="AF039454">
    <property type="protein sequence ID" value="AAB95335.1"/>
    <property type="status" value="JOINED"/>
    <property type="molecule type" value="Genomic_DNA"/>
</dbReference>
<dbReference type="EMBL" id="AF039455">
    <property type="protein sequence ID" value="AAB95335.1"/>
    <property type="status" value="JOINED"/>
    <property type="molecule type" value="Genomic_DNA"/>
</dbReference>
<dbReference type="EMBL" id="AF039456">
    <property type="protein sequence ID" value="AAB95335.1"/>
    <property type="status" value="JOINED"/>
    <property type="molecule type" value="Genomic_DNA"/>
</dbReference>
<dbReference type="EMBL" id="AF039457">
    <property type="protein sequence ID" value="AAB95335.1"/>
    <property type="status" value="JOINED"/>
    <property type="molecule type" value="Genomic_DNA"/>
</dbReference>
<dbReference type="EMBL" id="AF039458">
    <property type="protein sequence ID" value="AAB95335.1"/>
    <property type="status" value="JOINED"/>
    <property type="molecule type" value="Genomic_DNA"/>
</dbReference>
<dbReference type="EMBL" id="AF039460">
    <property type="protein sequence ID" value="AAB95332.1"/>
    <property type="molecule type" value="Genomic_DNA"/>
</dbReference>
<dbReference type="EMBL" id="AF039443">
    <property type="protein sequence ID" value="AAB95332.1"/>
    <property type="status" value="JOINED"/>
    <property type="molecule type" value="Genomic_DNA"/>
</dbReference>
<dbReference type="EMBL" id="AF039444">
    <property type="protein sequence ID" value="AAB95332.1"/>
    <property type="status" value="JOINED"/>
    <property type="molecule type" value="Genomic_DNA"/>
</dbReference>
<dbReference type="EMBL" id="AF039445">
    <property type="protein sequence ID" value="AAB95332.1"/>
    <property type="status" value="JOINED"/>
    <property type="molecule type" value="Genomic_DNA"/>
</dbReference>
<dbReference type="EMBL" id="AF039446">
    <property type="protein sequence ID" value="AAB95332.1"/>
    <property type="status" value="JOINED"/>
    <property type="molecule type" value="Genomic_DNA"/>
</dbReference>
<dbReference type="EMBL" id="AF039447">
    <property type="protein sequence ID" value="AAB95332.1"/>
    <property type="status" value="JOINED"/>
    <property type="molecule type" value="Genomic_DNA"/>
</dbReference>
<dbReference type="EMBL" id="AF039448">
    <property type="protein sequence ID" value="AAB95332.1"/>
    <property type="status" value="JOINED"/>
    <property type="molecule type" value="Genomic_DNA"/>
</dbReference>
<dbReference type="EMBL" id="AF039449">
    <property type="protein sequence ID" value="AAB95332.1"/>
    <property type="status" value="JOINED"/>
    <property type="molecule type" value="Genomic_DNA"/>
</dbReference>
<dbReference type="EMBL" id="AF039450">
    <property type="protein sequence ID" value="AAB95332.1"/>
    <property type="status" value="JOINED"/>
    <property type="molecule type" value="Genomic_DNA"/>
</dbReference>
<dbReference type="EMBL" id="AF039451">
    <property type="protein sequence ID" value="AAB95332.1"/>
    <property type="status" value="JOINED"/>
    <property type="molecule type" value="Genomic_DNA"/>
</dbReference>
<dbReference type="EMBL" id="AF039452">
    <property type="protein sequence ID" value="AAB95332.1"/>
    <property type="status" value="JOINED"/>
    <property type="molecule type" value="Genomic_DNA"/>
</dbReference>
<dbReference type="EMBL" id="AF039453">
    <property type="protein sequence ID" value="AAB95332.1"/>
    <property type="status" value="JOINED"/>
    <property type="molecule type" value="Genomic_DNA"/>
</dbReference>
<dbReference type="EMBL" id="AF039454">
    <property type="protein sequence ID" value="AAB95332.1"/>
    <property type="status" value="JOINED"/>
    <property type="molecule type" value="Genomic_DNA"/>
</dbReference>
<dbReference type="EMBL" id="AF039455">
    <property type="protein sequence ID" value="AAB95332.1"/>
    <property type="status" value="JOINED"/>
    <property type="molecule type" value="Genomic_DNA"/>
</dbReference>
<dbReference type="EMBL" id="AF039456">
    <property type="protein sequence ID" value="AAB95332.1"/>
    <property type="status" value="JOINED"/>
    <property type="molecule type" value="Genomic_DNA"/>
</dbReference>
<dbReference type="EMBL" id="AF039457">
    <property type="protein sequence ID" value="AAB95332.1"/>
    <property type="status" value="JOINED"/>
    <property type="molecule type" value="Genomic_DNA"/>
</dbReference>
<dbReference type="EMBL" id="AF039458">
    <property type="protein sequence ID" value="AAB95332.1"/>
    <property type="status" value="JOINED"/>
    <property type="molecule type" value="Genomic_DNA"/>
</dbReference>
<dbReference type="EMBL" id="AF039459">
    <property type="protein sequence ID" value="AAB95332.1"/>
    <property type="status" value="JOINED"/>
    <property type="molecule type" value="Genomic_DNA"/>
</dbReference>
<dbReference type="EMBL" id="Y10296">
    <property type="protein sequence ID" value="CAA71342.1"/>
    <property type="molecule type" value="mRNA"/>
</dbReference>
<dbReference type="EMBL" id="AF098792">
    <property type="protein sequence ID" value="AAD13218.1"/>
    <property type="molecule type" value="Genomic_DNA"/>
</dbReference>
<dbReference type="CCDS" id="CCDS18397.1">
    <molecule id="P48356-3"/>
</dbReference>
<dbReference type="CCDS" id="CCDS51239.1">
    <molecule id="P48356-2"/>
</dbReference>
<dbReference type="CCDS" id="CCDS51240.1">
    <molecule id="P48356-1"/>
</dbReference>
<dbReference type="PIR" id="S68437">
    <property type="entry name" value="S68437"/>
</dbReference>
<dbReference type="PIR" id="S68438">
    <property type="entry name" value="S68438"/>
</dbReference>
<dbReference type="PIR" id="S68439">
    <property type="entry name" value="S68439"/>
</dbReference>
<dbReference type="PIR" id="S68440">
    <property type="entry name" value="S68440"/>
</dbReference>
<dbReference type="PIR" id="S68441">
    <property type="entry name" value="S68441"/>
</dbReference>
<dbReference type="RefSeq" id="NP_001116371.1">
    <molecule id="P48356-2"/>
    <property type="nucleotide sequence ID" value="NM_001122899.2"/>
</dbReference>
<dbReference type="RefSeq" id="NP_034834.1">
    <molecule id="P48356-3"/>
    <property type="nucleotide sequence ID" value="NM_010704.3"/>
</dbReference>
<dbReference type="RefSeq" id="NP_666258.2">
    <molecule id="P48356-1"/>
    <property type="nucleotide sequence ID" value="NM_146146.4"/>
</dbReference>
<dbReference type="PDB" id="7Z3P">
    <property type="method" value="X-ray"/>
    <property type="resolution" value="1.94 A"/>
    <property type="chains" value="B=426-633"/>
</dbReference>
<dbReference type="PDB" id="7Z3R">
    <property type="method" value="X-ray"/>
    <property type="resolution" value="2.95 A"/>
    <property type="chains" value="B=328-633"/>
</dbReference>
<dbReference type="PDB" id="8AV2">
    <property type="method" value="X-ray"/>
    <property type="resolution" value="1.75 A"/>
    <property type="chains" value="A/B=633-827"/>
</dbReference>
<dbReference type="PDB" id="8AVB">
    <property type="method" value="EM"/>
    <property type="resolution" value="4.43 A"/>
    <property type="chains" value="B/F=22-839"/>
</dbReference>
<dbReference type="PDB" id="8AVC">
    <property type="method" value="EM"/>
    <property type="resolution" value="4.60 A"/>
    <property type="chains" value="B/D/F=22-839"/>
</dbReference>
<dbReference type="PDB" id="8AVD">
    <property type="method" value="EM"/>
    <property type="resolution" value="4.42 A"/>
    <property type="chains" value="B/D/F=22-839"/>
</dbReference>
<dbReference type="PDB" id="8B7Q">
    <property type="method" value="EM"/>
    <property type="resolution" value="4.02 A"/>
    <property type="chains" value="B/F=22-839"/>
</dbReference>
<dbReference type="PDB" id="8DH8">
    <property type="method" value="EM"/>
    <property type="resolution" value="5.90 A"/>
    <property type="chains" value="A/B=22-839"/>
</dbReference>
<dbReference type="PDB" id="8DH9">
    <property type="method" value="EM"/>
    <property type="resolution" value="4.50 A"/>
    <property type="chains" value="A/B=328-839"/>
</dbReference>
<dbReference type="PDB" id="8DHA">
    <property type="method" value="EM"/>
    <property type="resolution" value="3.80 A"/>
    <property type="chains" value="A/B=330-839"/>
</dbReference>
<dbReference type="PDBsum" id="7Z3P"/>
<dbReference type="PDBsum" id="7Z3R"/>
<dbReference type="PDBsum" id="8AV2"/>
<dbReference type="PDBsum" id="8AVB"/>
<dbReference type="PDBsum" id="8AVC"/>
<dbReference type="PDBsum" id="8AVD"/>
<dbReference type="PDBsum" id="8B7Q"/>
<dbReference type="PDBsum" id="8DH8"/>
<dbReference type="PDBsum" id="8DH9"/>
<dbReference type="PDBsum" id="8DHA"/>
<dbReference type="EMDB" id="EMD-15677"/>
<dbReference type="EMDB" id="EMD-15678"/>
<dbReference type="EMDB" id="EMD-15679"/>
<dbReference type="EMDB" id="EMD-15899"/>
<dbReference type="EMDB" id="EMD-27432"/>
<dbReference type="EMDB" id="EMD-27433"/>
<dbReference type="EMDB" id="EMD-27434"/>
<dbReference type="SMR" id="P48356"/>
<dbReference type="BioGRID" id="201139">
    <property type="interactions" value="9"/>
</dbReference>
<dbReference type="CORUM" id="P48356"/>
<dbReference type="DIP" id="DIP-42763N"/>
<dbReference type="ELM" id="P48356"/>
<dbReference type="FunCoup" id="P48356">
    <property type="interactions" value="959"/>
</dbReference>
<dbReference type="IntAct" id="P48356">
    <property type="interactions" value="13"/>
</dbReference>
<dbReference type="MINT" id="P48356"/>
<dbReference type="STRING" id="10090.ENSMUSP00000037385"/>
<dbReference type="GuidetoPHARMACOLOGY" id="1712"/>
<dbReference type="GlyCosmos" id="P48356">
    <property type="glycosylation" value="16 sites, No reported glycans"/>
</dbReference>
<dbReference type="GlyGen" id="P48356">
    <property type="glycosylation" value="16 sites, 4 N-linked glycans (6 sites)"/>
</dbReference>
<dbReference type="iPTMnet" id="P48356"/>
<dbReference type="PhosphoSitePlus" id="P48356"/>
<dbReference type="CPTAC" id="non-CPTAC-4044"/>
<dbReference type="PaxDb" id="10090-ENSMUSP00000037385"/>
<dbReference type="PeptideAtlas" id="P48356"/>
<dbReference type="ProteomicsDB" id="264736">
    <molecule id="P48356-1"/>
</dbReference>
<dbReference type="ProteomicsDB" id="264737">
    <molecule id="P48356-2"/>
</dbReference>
<dbReference type="ProteomicsDB" id="264738">
    <molecule id="P48356-3"/>
</dbReference>
<dbReference type="ProteomicsDB" id="264739">
    <molecule id="P48356-4"/>
</dbReference>
<dbReference type="ProteomicsDB" id="264740">
    <molecule id="P48356-5"/>
</dbReference>
<dbReference type="Antibodypedia" id="33374">
    <property type="antibodies" value="880 antibodies from 43 providers"/>
</dbReference>
<dbReference type="DNASU" id="16847"/>
<dbReference type="Ensembl" id="ENSMUST00000037552.10">
    <molecule id="P48356-1"/>
    <property type="protein sequence ID" value="ENSMUSP00000037385.4"/>
    <property type="gene ID" value="ENSMUSG00000057722.18"/>
</dbReference>
<dbReference type="Ensembl" id="ENSMUST00000102777.10">
    <molecule id="P48356-3"/>
    <property type="protein sequence ID" value="ENSMUSP00000099838.4"/>
    <property type="gene ID" value="ENSMUSG00000057722.18"/>
</dbReference>
<dbReference type="Ensembl" id="ENSMUST00000106921.9">
    <molecule id="P48356-2"/>
    <property type="protein sequence ID" value="ENSMUSP00000102534.3"/>
    <property type="gene ID" value="ENSMUSG00000057722.18"/>
</dbReference>
<dbReference type="GeneID" id="16847"/>
<dbReference type="KEGG" id="mmu:16847"/>
<dbReference type="UCSC" id="uc008tvx.2">
    <molecule id="P48356-1"/>
    <property type="organism name" value="mouse"/>
</dbReference>
<dbReference type="UCSC" id="uc008twa.1">
    <molecule id="P48356-5"/>
    <property type="organism name" value="mouse"/>
</dbReference>
<dbReference type="AGR" id="MGI:104993"/>
<dbReference type="CTD" id="3953"/>
<dbReference type="MGI" id="MGI:104993">
    <property type="gene designation" value="Lepr"/>
</dbReference>
<dbReference type="VEuPathDB" id="HostDB:ENSMUSG00000057722"/>
<dbReference type="eggNOG" id="ENOG502RK5B">
    <property type="taxonomic scope" value="Eukaryota"/>
</dbReference>
<dbReference type="GeneTree" id="ENSGT00730000111209"/>
<dbReference type="HOGENOM" id="CLU_008491_0_0_1"/>
<dbReference type="InParanoid" id="P48356"/>
<dbReference type="OMA" id="FPPHCLF"/>
<dbReference type="OrthoDB" id="8964127at2759"/>
<dbReference type="PhylomeDB" id="P48356"/>
<dbReference type="TreeFam" id="TF106501"/>
<dbReference type="BioGRID-ORCS" id="16847">
    <property type="hits" value="1 hit in 77 CRISPR screens"/>
</dbReference>
<dbReference type="ChiTaRS" id="Lepr">
    <property type="organism name" value="mouse"/>
</dbReference>
<dbReference type="PRO" id="PR:P48356"/>
<dbReference type="Proteomes" id="UP000000589">
    <property type="component" value="Chromosome 4"/>
</dbReference>
<dbReference type="RNAct" id="P48356">
    <property type="molecule type" value="protein"/>
</dbReference>
<dbReference type="Bgee" id="ENSMUSG00000057722">
    <property type="expression patterns" value="Expressed in placenta labyrinth and 176 other cell types or tissues"/>
</dbReference>
<dbReference type="ExpressionAtlas" id="P48356">
    <property type="expression patterns" value="baseline and differential"/>
</dbReference>
<dbReference type="GO" id="GO:0016323">
    <property type="term" value="C:basolateral plasma membrane"/>
    <property type="evidence" value="ECO:0007669"/>
    <property type="project" value="UniProtKB-SubCell"/>
</dbReference>
<dbReference type="GO" id="GO:0005576">
    <property type="term" value="C:extracellular region"/>
    <property type="evidence" value="ECO:0007669"/>
    <property type="project" value="UniProtKB-SubCell"/>
</dbReference>
<dbReference type="GO" id="GO:0005886">
    <property type="term" value="C:plasma membrane"/>
    <property type="evidence" value="ECO:0000304"/>
    <property type="project" value="MGI"/>
</dbReference>
<dbReference type="GO" id="GO:0043235">
    <property type="term" value="C:receptor complex"/>
    <property type="evidence" value="ECO:0000266"/>
    <property type="project" value="MGI"/>
</dbReference>
<dbReference type="GO" id="GO:0038021">
    <property type="term" value="F:leptin receptor activity"/>
    <property type="evidence" value="ECO:0000315"/>
    <property type="project" value="UniProtKB"/>
</dbReference>
<dbReference type="GO" id="GO:0017046">
    <property type="term" value="F:peptide hormone binding"/>
    <property type="evidence" value="ECO:0007669"/>
    <property type="project" value="Ensembl"/>
</dbReference>
<dbReference type="GO" id="GO:0004888">
    <property type="term" value="F:transmembrane signaling receptor activity"/>
    <property type="evidence" value="ECO:0000304"/>
    <property type="project" value="MGI"/>
</dbReference>
<dbReference type="GO" id="GO:0001525">
    <property type="term" value="P:angiogenesis"/>
    <property type="evidence" value="ECO:0000250"/>
    <property type="project" value="UniProtKB"/>
</dbReference>
<dbReference type="GO" id="GO:0098868">
    <property type="term" value="P:bone growth"/>
    <property type="evidence" value="ECO:0000315"/>
    <property type="project" value="UniProtKB"/>
</dbReference>
<dbReference type="GO" id="GO:0097696">
    <property type="term" value="P:cell surface receptor signaling pathway via STAT"/>
    <property type="evidence" value="ECO:0007669"/>
    <property type="project" value="Ensembl"/>
</dbReference>
<dbReference type="GO" id="GO:0008203">
    <property type="term" value="P:cholesterol metabolic process"/>
    <property type="evidence" value="ECO:0000316"/>
    <property type="project" value="MGI"/>
</dbReference>
<dbReference type="GO" id="GO:0097009">
    <property type="term" value="P:energy homeostasis"/>
    <property type="evidence" value="ECO:0000315"/>
    <property type="project" value="UniProtKB"/>
</dbReference>
<dbReference type="GO" id="GO:0014009">
    <property type="term" value="P:glial cell proliferation"/>
    <property type="evidence" value="ECO:0000316"/>
    <property type="project" value="MGI"/>
</dbReference>
<dbReference type="GO" id="GO:0006094">
    <property type="term" value="P:gluconeogenesis"/>
    <property type="evidence" value="ECO:0000315"/>
    <property type="project" value="MGI"/>
</dbReference>
<dbReference type="GO" id="GO:0042593">
    <property type="term" value="P:glucose homeostasis"/>
    <property type="evidence" value="ECO:0000315"/>
    <property type="project" value="UniProtKB"/>
</dbReference>
<dbReference type="GO" id="GO:0005977">
    <property type="term" value="P:glycogen metabolic process"/>
    <property type="evidence" value="ECO:0000316"/>
    <property type="project" value="MGI"/>
</dbReference>
<dbReference type="GO" id="GO:0033210">
    <property type="term" value="P:leptin-mediated signaling pathway"/>
    <property type="evidence" value="ECO:0000315"/>
    <property type="project" value="UniProtKB"/>
</dbReference>
<dbReference type="GO" id="GO:0010507">
    <property type="term" value="P:negative regulation of autophagy"/>
    <property type="evidence" value="ECO:0000250"/>
    <property type="project" value="UniProtKB"/>
</dbReference>
<dbReference type="GO" id="GO:0045721">
    <property type="term" value="P:negative regulation of gluconeogenesis"/>
    <property type="evidence" value="ECO:0000315"/>
    <property type="project" value="MGI"/>
</dbReference>
<dbReference type="GO" id="GO:0006909">
    <property type="term" value="P:phagocytosis"/>
    <property type="evidence" value="ECO:0000315"/>
    <property type="project" value="UniProtKB"/>
</dbReference>
<dbReference type="GO" id="GO:0120162">
    <property type="term" value="P:positive regulation of cold-induced thermogenesis"/>
    <property type="evidence" value="ECO:0000315"/>
    <property type="project" value="YuBioLab"/>
</dbReference>
<dbReference type="GO" id="GO:0046850">
    <property type="term" value="P:regulation of bone remodeling"/>
    <property type="evidence" value="ECO:0000315"/>
    <property type="project" value="UniProtKB"/>
</dbReference>
<dbReference type="GO" id="GO:0060259">
    <property type="term" value="P:regulation of feeding behavior"/>
    <property type="evidence" value="ECO:0000315"/>
    <property type="project" value="UniProtKB"/>
</dbReference>
<dbReference type="GO" id="GO:0019222">
    <property type="term" value="P:regulation of metabolic process"/>
    <property type="evidence" value="ECO:0000304"/>
    <property type="project" value="MGI"/>
</dbReference>
<dbReference type="GO" id="GO:0051049">
    <property type="term" value="P:regulation of transport"/>
    <property type="evidence" value="ECO:0007669"/>
    <property type="project" value="Ensembl"/>
</dbReference>
<dbReference type="GO" id="GO:0044321">
    <property type="term" value="P:response to leptin"/>
    <property type="evidence" value="ECO:0000315"/>
    <property type="project" value="UniProtKB"/>
</dbReference>
<dbReference type="GO" id="GO:0019953">
    <property type="term" value="P:sexual reproduction"/>
    <property type="evidence" value="ECO:0000315"/>
    <property type="project" value="UniProtKB"/>
</dbReference>
<dbReference type="GO" id="GO:0007165">
    <property type="term" value="P:signal transduction"/>
    <property type="evidence" value="ECO:0000304"/>
    <property type="project" value="MGI"/>
</dbReference>
<dbReference type="GO" id="GO:0030217">
    <property type="term" value="P:T cell differentiation"/>
    <property type="evidence" value="ECO:0000315"/>
    <property type="project" value="UniProtKB"/>
</dbReference>
<dbReference type="CDD" id="cd00063">
    <property type="entry name" value="FN3"/>
    <property type="match status" value="3"/>
</dbReference>
<dbReference type="FunFam" id="2.60.40.10:FF:000494">
    <property type="entry name" value="Leptin receptor"/>
    <property type="match status" value="1"/>
</dbReference>
<dbReference type="FunFam" id="2.60.40.10:FF:000501">
    <property type="entry name" value="Leptin receptor"/>
    <property type="match status" value="1"/>
</dbReference>
<dbReference type="FunFam" id="2.60.40.10:FF:000515">
    <property type="entry name" value="Leptin receptor"/>
    <property type="match status" value="1"/>
</dbReference>
<dbReference type="FunFam" id="2.60.40.10:FF:000558">
    <property type="entry name" value="Leptin receptor"/>
    <property type="match status" value="1"/>
</dbReference>
<dbReference type="FunFam" id="2.60.40.10:FF:000568">
    <property type="entry name" value="Leptin receptor"/>
    <property type="match status" value="1"/>
</dbReference>
<dbReference type="FunFam" id="2.60.40.10:FF:000613">
    <property type="entry name" value="Leptin receptor"/>
    <property type="match status" value="1"/>
</dbReference>
<dbReference type="FunFam" id="2.60.40.10:FF:000688">
    <property type="entry name" value="Leptin receptor"/>
    <property type="match status" value="1"/>
</dbReference>
<dbReference type="Gene3D" id="2.60.40.10">
    <property type="entry name" value="Immunoglobulins"/>
    <property type="match status" value="7"/>
</dbReference>
<dbReference type="InterPro" id="IPR003961">
    <property type="entry name" value="FN3_dom"/>
</dbReference>
<dbReference type="InterPro" id="IPR036116">
    <property type="entry name" value="FN3_sf"/>
</dbReference>
<dbReference type="InterPro" id="IPR003529">
    <property type="entry name" value="Hematopoietin_rcpt_Gp130_CS"/>
</dbReference>
<dbReference type="InterPro" id="IPR003531">
    <property type="entry name" value="Hempt_rcpt_S_F1_CS"/>
</dbReference>
<dbReference type="InterPro" id="IPR007110">
    <property type="entry name" value="Ig-like_dom"/>
</dbReference>
<dbReference type="InterPro" id="IPR013783">
    <property type="entry name" value="Ig-like_fold"/>
</dbReference>
<dbReference type="InterPro" id="IPR010457">
    <property type="entry name" value="IgC2-like_lig-bd"/>
</dbReference>
<dbReference type="InterPro" id="IPR041182">
    <property type="entry name" value="LEP-R_IGD"/>
</dbReference>
<dbReference type="PANTHER" id="PTHR23037">
    <property type="entry name" value="CYTOKINE RECEPTOR"/>
    <property type="match status" value="1"/>
</dbReference>
<dbReference type="PANTHER" id="PTHR23037:SF44">
    <property type="entry name" value="LEPTIN RECEPTOR"/>
    <property type="match status" value="1"/>
</dbReference>
<dbReference type="Pfam" id="PF00041">
    <property type="entry name" value="fn3"/>
    <property type="match status" value="1"/>
</dbReference>
<dbReference type="Pfam" id="PF06328">
    <property type="entry name" value="Lep_receptor_Ig"/>
    <property type="match status" value="1"/>
</dbReference>
<dbReference type="Pfam" id="PF18589">
    <property type="entry name" value="ObR_Ig"/>
    <property type="match status" value="2"/>
</dbReference>
<dbReference type="SMART" id="SM00060">
    <property type="entry name" value="FN3"/>
    <property type="match status" value="4"/>
</dbReference>
<dbReference type="SUPFAM" id="SSF49265">
    <property type="entry name" value="Fibronectin type III"/>
    <property type="match status" value="4"/>
</dbReference>
<dbReference type="PROSITE" id="PS50853">
    <property type="entry name" value="FN3"/>
    <property type="match status" value="3"/>
</dbReference>
<dbReference type="PROSITE" id="PS01353">
    <property type="entry name" value="HEMATOPO_REC_L_F2"/>
    <property type="match status" value="1"/>
</dbReference>
<dbReference type="PROSITE" id="PS50835">
    <property type="entry name" value="IG_LIKE"/>
    <property type="match status" value="1"/>
</dbReference>
<accession>P48356</accession>
<accession>O35686</accession>
<accession>O54986</accession>
<accession>Q61215</accession>
<accession>Q64309</accession>
<accession>Q9QWG3</accession>
<accession>Q9QWV5</accession>